<keyword id="KW-1015">Disulfide bond</keyword>
<keyword id="KW-0964">Secreted</keyword>
<keyword id="KW-0732">Signal</keyword>
<keyword id="KW-0800">Toxin</keyword>
<accession>F5CPE6</accession>
<proteinExistence type="evidence at protein level"/>
<reference key="1">
    <citation type="journal article" date="2011" name="J. Proteomics">
        <title>Snake venomics and venom gland transcriptomic analysis of Brazilian coral snakes, Micrurus altirostris and M. corallinus.</title>
        <authorList>
            <person name="Correa-Netto C."/>
            <person name="Junqueira-de-Azevedo Ide L."/>
            <person name="Silva D.A."/>
            <person name="Ho P.L."/>
            <person name="Leitao-de-Araujo M."/>
            <person name="Alves M.L."/>
            <person name="Sanz L."/>
            <person name="Foguel D."/>
            <person name="Zingali R.B."/>
            <person name="Calvete J.J."/>
        </authorList>
    </citation>
    <scope>NUCLEOTIDE SEQUENCE [MRNA]</scope>
    <scope>IDENTIFICATION BY MASS SPECTROMETRY</scope>
    <scope>SUBCELLULAR LOCATION</scope>
    <source>
        <tissue>Venom</tissue>
        <tissue>Venom gland</tissue>
    </source>
</reference>
<evidence type="ECO:0000250" key="1">
    <source>
        <dbReference type="UniProtKB" id="P60301"/>
    </source>
</evidence>
<evidence type="ECO:0000255" key="2"/>
<evidence type="ECO:0000269" key="3">
    <source>
    </source>
</evidence>
<evidence type="ECO:0000305" key="4"/>
<evidence type="ECO:0000312" key="5">
    <source>
        <dbReference type="EMBL" id="AED89573.1"/>
    </source>
</evidence>
<organism>
    <name type="scientific">Micrurus altirostris</name>
    <name type="common">Uruguayan coral snake</name>
    <name type="synonym">Elaps altirostris</name>
    <dbReference type="NCBI Taxonomy" id="129457"/>
    <lineage>
        <taxon>Eukaryota</taxon>
        <taxon>Metazoa</taxon>
        <taxon>Chordata</taxon>
        <taxon>Craniata</taxon>
        <taxon>Vertebrata</taxon>
        <taxon>Euteleostomi</taxon>
        <taxon>Lepidosauria</taxon>
        <taxon>Squamata</taxon>
        <taxon>Bifurcata</taxon>
        <taxon>Unidentata</taxon>
        <taxon>Episquamata</taxon>
        <taxon>Toxicofera</taxon>
        <taxon>Serpentes</taxon>
        <taxon>Colubroidea</taxon>
        <taxon>Elapidae</taxon>
        <taxon>Elapinae</taxon>
        <taxon>Micrurus</taxon>
    </lineage>
</organism>
<name>3SX0_MICAT</name>
<feature type="signal peptide" evidence="2">
    <location>
        <begin position="1"/>
        <end position="21"/>
    </location>
</feature>
<feature type="chain" id="PRO_0000422905" description="Three-finger toxin MALT0070C">
    <location>
        <begin position="22"/>
        <end position="84"/>
    </location>
</feature>
<feature type="disulfide bond" evidence="1">
    <location>
        <begin position="24"/>
        <end position="43"/>
    </location>
</feature>
<feature type="disulfide bond" evidence="1">
    <location>
        <begin position="36"/>
        <end position="60"/>
    </location>
</feature>
<feature type="disulfide bond" evidence="1">
    <location>
        <begin position="64"/>
        <end position="71"/>
    </location>
</feature>
<feature type="disulfide bond" evidence="1">
    <location>
        <begin position="72"/>
        <end position="77"/>
    </location>
</feature>
<comment type="subcellular location">
    <subcellularLocation>
        <location evidence="3">Secreted</location>
    </subcellularLocation>
</comment>
<comment type="tissue specificity">
    <text evidence="4">Expressed by the venom gland.</text>
</comment>
<comment type="similarity">
    <text evidence="4">Belongs to the three-finger toxin family. Short-chain subfamily.</text>
</comment>
<protein>
    <recommendedName>
        <fullName evidence="5">Three-finger toxin MALT0070C</fullName>
        <shortName evidence="4">3FTx MALT0070C</shortName>
    </recommendedName>
</protein>
<sequence length="84" mass="9069">MKTLLLTLVVVTIVCLDLGYTLKCYVGRKPYKLITCPEGSKKCATVPLPTRPLPIFSKGCYTSCPSQYVKCCSTDLCNGSPTSG</sequence>
<dbReference type="EMBL" id="JF754484">
    <property type="protein sequence ID" value="AED89573.1"/>
    <property type="molecule type" value="mRNA"/>
</dbReference>
<dbReference type="SMR" id="F5CPE6"/>
<dbReference type="GO" id="GO:0005576">
    <property type="term" value="C:extracellular region"/>
    <property type="evidence" value="ECO:0007669"/>
    <property type="project" value="UniProtKB-SubCell"/>
</dbReference>
<dbReference type="GO" id="GO:0090729">
    <property type="term" value="F:toxin activity"/>
    <property type="evidence" value="ECO:0007669"/>
    <property type="project" value="UniProtKB-KW"/>
</dbReference>
<dbReference type="Gene3D" id="2.10.60.10">
    <property type="entry name" value="CD59"/>
    <property type="match status" value="1"/>
</dbReference>
<dbReference type="InterPro" id="IPR045860">
    <property type="entry name" value="Snake_toxin-like_sf"/>
</dbReference>
<dbReference type="SUPFAM" id="SSF57302">
    <property type="entry name" value="Snake toxin-like"/>
    <property type="match status" value="1"/>
</dbReference>